<organism>
    <name type="scientific">Manihot esculenta</name>
    <name type="common">Cassava</name>
    <name type="synonym">Jatropha manihot</name>
    <dbReference type="NCBI Taxonomy" id="3983"/>
    <lineage>
        <taxon>Eukaryota</taxon>
        <taxon>Viridiplantae</taxon>
        <taxon>Streptophyta</taxon>
        <taxon>Embryophyta</taxon>
        <taxon>Tracheophyta</taxon>
        <taxon>Spermatophyta</taxon>
        <taxon>Magnoliopsida</taxon>
        <taxon>eudicotyledons</taxon>
        <taxon>Gunneridae</taxon>
        <taxon>Pentapetalae</taxon>
        <taxon>rosids</taxon>
        <taxon>fabids</taxon>
        <taxon>Malpighiales</taxon>
        <taxon>Euphorbiaceae</taxon>
        <taxon>Crotonoideae</taxon>
        <taxon>Manihoteae</taxon>
        <taxon>Manihot</taxon>
    </lineage>
</organism>
<dbReference type="EMBL" id="EU117376">
    <property type="protein sequence ID" value="ABV66199.1"/>
    <property type="molecule type" value="Genomic_DNA"/>
</dbReference>
<dbReference type="EMBL" id="EU117376">
    <property type="protein sequence ID" value="ABV66213.1"/>
    <property type="molecule type" value="Genomic_DNA"/>
</dbReference>
<dbReference type="SMR" id="B1NWJ5"/>
<dbReference type="KEGG" id="mesc:5999962"/>
<dbReference type="KEGG" id="mesc:6000063"/>
<dbReference type="OrthoDB" id="816221at2759"/>
<dbReference type="GO" id="GO:0009507">
    <property type="term" value="C:chloroplast"/>
    <property type="evidence" value="ECO:0007669"/>
    <property type="project" value="UniProtKB-SubCell"/>
</dbReference>
<dbReference type="GO" id="GO:0015935">
    <property type="term" value="C:small ribosomal subunit"/>
    <property type="evidence" value="ECO:0007669"/>
    <property type="project" value="InterPro"/>
</dbReference>
<dbReference type="GO" id="GO:0019843">
    <property type="term" value="F:rRNA binding"/>
    <property type="evidence" value="ECO:0007669"/>
    <property type="project" value="UniProtKB-UniRule"/>
</dbReference>
<dbReference type="GO" id="GO:0003735">
    <property type="term" value="F:structural constituent of ribosome"/>
    <property type="evidence" value="ECO:0007669"/>
    <property type="project" value="InterPro"/>
</dbReference>
<dbReference type="GO" id="GO:0006412">
    <property type="term" value="P:translation"/>
    <property type="evidence" value="ECO:0007669"/>
    <property type="project" value="UniProtKB-UniRule"/>
</dbReference>
<dbReference type="CDD" id="cd14871">
    <property type="entry name" value="uS7_Chloroplast"/>
    <property type="match status" value="1"/>
</dbReference>
<dbReference type="FunFam" id="1.10.455.10:FF:000001">
    <property type="entry name" value="30S ribosomal protein S7"/>
    <property type="match status" value="1"/>
</dbReference>
<dbReference type="Gene3D" id="1.10.455.10">
    <property type="entry name" value="Ribosomal protein S7 domain"/>
    <property type="match status" value="1"/>
</dbReference>
<dbReference type="HAMAP" id="MF_00480_B">
    <property type="entry name" value="Ribosomal_uS7_B"/>
    <property type="match status" value="1"/>
</dbReference>
<dbReference type="InterPro" id="IPR000235">
    <property type="entry name" value="Ribosomal_uS7"/>
</dbReference>
<dbReference type="InterPro" id="IPR005717">
    <property type="entry name" value="Ribosomal_uS7_bac/org-type"/>
</dbReference>
<dbReference type="InterPro" id="IPR020606">
    <property type="entry name" value="Ribosomal_uS7_CS"/>
</dbReference>
<dbReference type="InterPro" id="IPR023798">
    <property type="entry name" value="Ribosomal_uS7_dom"/>
</dbReference>
<dbReference type="InterPro" id="IPR036823">
    <property type="entry name" value="Ribosomal_uS7_dom_sf"/>
</dbReference>
<dbReference type="NCBIfam" id="TIGR01029">
    <property type="entry name" value="rpsG_bact"/>
    <property type="match status" value="1"/>
</dbReference>
<dbReference type="PANTHER" id="PTHR11205">
    <property type="entry name" value="RIBOSOMAL PROTEIN S7"/>
    <property type="match status" value="1"/>
</dbReference>
<dbReference type="Pfam" id="PF00177">
    <property type="entry name" value="Ribosomal_S7"/>
    <property type="match status" value="1"/>
</dbReference>
<dbReference type="PIRSF" id="PIRSF002122">
    <property type="entry name" value="RPS7p_RPS7a_RPS5e_RPS7o"/>
    <property type="match status" value="1"/>
</dbReference>
<dbReference type="SUPFAM" id="SSF47973">
    <property type="entry name" value="Ribosomal protein S7"/>
    <property type="match status" value="1"/>
</dbReference>
<dbReference type="PROSITE" id="PS00052">
    <property type="entry name" value="RIBOSOMAL_S7"/>
    <property type="match status" value="1"/>
</dbReference>
<evidence type="ECO:0000250" key="1"/>
<evidence type="ECO:0000255" key="2">
    <source>
        <dbReference type="HAMAP-Rule" id="MF_00480"/>
    </source>
</evidence>
<evidence type="ECO:0000305" key="3"/>
<protein>
    <recommendedName>
        <fullName evidence="2">Small ribosomal subunit protein uS7cz/uS7cy</fullName>
    </recommendedName>
    <alternativeName>
        <fullName>30S ribosomal protein S7, chloroplastic</fullName>
    </alternativeName>
</protein>
<proteinExistence type="inferred from homology"/>
<feature type="chain" id="PRO_0000344349" description="Small ribosomal subunit protein uS7cz/uS7cy">
    <location>
        <begin position="1"/>
        <end position="155"/>
    </location>
</feature>
<accession>B1NWJ5</accession>
<name>RR7_MANES</name>
<geneLocation type="chloroplast"/>
<reference key="1">
    <citation type="journal article" date="2008" name="Theor. Appl. Genet.">
        <title>The complete nucleotide sequence of the cassava (Manihot esculenta) chloroplast genome and the evolution of atpF in Malpighiales: RNA editing and multiple losses of a group II intron.</title>
        <authorList>
            <person name="Daniell H."/>
            <person name="Wurdack K.J."/>
            <person name="Kanagaraj A."/>
            <person name="Lee S.-B."/>
            <person name="Saski C."/>
            <person name="Jansen R.K."/>
        </authorList>
    </citation>
    <scope>NUCLEOTIDE SEQUENCE [LARGE SCALE GENOMIC DNA]</scope>
    <source>
        <strain>cv. TME3</strain>
    </source>
</reference>
<gene>
    <name type="primary">rps7-A</name>
</gene>
<gene>
    <name type="primary">rps7-B</name>
</gene>
<keyword id="KW-0150">Chloroplast</keyword>
<keyword id="KW-0934">Plastid</keyword>
<keyword id="KW-0687">Ribonucleoprotein</keyword>
<keyword id="KW-0689">Ribosomal protein</keyword>
<keyword id="KW-0694">RNA-binding</keyword>
<keyword id="KW-0699">rRNA-binding</keyword>
<comment type="function">
    <text evidence="1">One of the primary rRNA binding proteins, it binds directly to 16S rRNA where it nucleates assembly of the head domain of the 30S subunit.</text>
</comment>
<comment type="subunit">
    <text evidence="1">Part of the 30S ribosomal subunit.</text>
</comment>
<comment type="subcellular location">
    <subcellularLocation>
        <location>Plastid</location>
        <location>Chloroplast</location>
    </subcellularLocation>
</comment>
<comment type="similarity">
    <text evidence="3">Belongs to the universal ribosomal protein uS7 family.</text>
</comment>
<sequence>MSRRGTAEEKTAKSDPIYRNRLVNMLVNRILKHGKKSLAYQIIYRAMKKIQQKTETNPLSVLRQAIRGVTPDIAVKARRVGGSTHQVPIEIGSTQGKALAIRWLLGASRKRPGRNMAFKLSSELVDAAKGSGDAIRKKEETHRMAEANRAFAHFR</sequence>